<protein>
    <recommendedName>
        <fullName evidence="1">Probable protein kinase UbiB</fullName>
        <ecNumber evidence="1">2.7.-.-</ecNumber>
    </recommendedName>
    <alternativeName>
        <fullName evidence="1">Ubiquinone biosynthesis protein UbiB</fullName>
    </alternativeName>
</protein>
<organism>
    <name type="scientific">Escherichia coli (strain K12)</name>
    <dbReference type="NCBI Taxonomy" id="83333"/>
    <lineage>
        <taxon>Bacteria</taxon>
        <taxon>Pseudomonadati</taxon>
        <taxon>Pseudomonadota</taxon>
        <taxon>Gammaproteobacteria</taxon>
        <taxon>Enterobacterales</taxon>
        <taxon>Enterobacteriaceae</taxon>
        <taxon>Escherichia</taxon>
    </lineage>
</organism>
<comment type="function">
    <text evidence="1 2 4">Is probably a protein kinase regulator of UbiI activity which is involved in aerobic coenzyme Q (ubiquinone) biosynthesis.</text>
</comment>
<comment type="pathway">
    <text>Cofactor biosynthesis; ubiquinone biosynthesis [regulation].</text>
</comment>
<comment type="subcellular location">
    <subcellularLocation>
        <location evidence="1 3">Cell inner membrane</location>
        <topology evidence="1 3">Multi-pass membrane protein</topology>
    </subcellularLocation>
</comment>
<comment type="disruption phenotype">
    <text evidence="2 4">Cells lacking this gene fail to produce coenzyme Q8, and accumulate octaprenylphenol (OPP).</text>
</comment>
<comment type="similarity">
    <text evidence="1">Belongs to the ABC1 family. UbiB subfamily.</text>
</comment>
<reference key="1">
    <citation type="journal article" date="1992" name="Science">
        <title>Analysis of the Escherichia coli genome: DNA sequence of the region from 84.5 to 86.5 minutes.</title>
        <authorList>
            <person name="Daniels D.L."/>
            <person name="Plunkett G. III"/>
            <person name="Burland V.D."/>
            <person name="Blattner F.R."/>
        </authorList>
    </citation>
    <scope>NUCLEOTIDE SEQUENCE [LARGE SCALE GENOMIC DNA]</scope>
    <source>
        <strain>K12 / MG1655 / ATCC 47076</strain>
    </source>
</reference>
<reference key="2">
    <citation type="journal article" date="1997" name="Science">
        <title>The complete genome sequence of Escherichia coli K-12.</title>
        <authorList>
            <person name="Blattner F.R."/>
            <person name="Plunkett G. III"/>
            <person name="Bloch C.A."/>
            <person name="Perna N.T."/>
            <person name="Burland V."/>
            <person name="Riley M."/>
            <person name="Collado-Vides J."/>
            <person name="Glasner J.D."/>
            <person name="Rode C.K."/>
            <person name="Mayhew G.F."/>
            <person name="Gregor J."/>
            <person name="Davis N.W."/>
            <person name="Kirkpatrick H.A."/>
            <person name="Goeden M.A."/>
            <person name="Rose D.J."/>
            <person name="Mau B."/>
            <person name="Shao Y."/>
        </authorList>
    </citation>
    <scope>NUCLEOTIDE SEQUENCE [LARGE SCALE GENOMIC DNA]</scope>
    <scope>SEQUENCE REVISION</scope>
    <source>
        <strain>K12 / MG1655 / ATCC 47076</strain>
    </source>
</reference>
<reference key="3">
    <citation type="journal article" date="2006" name="Mol. Syst. Biol.">
        <title>Highly accurate genome sequences of Escherichia coli K-12 strains MG1655 and W3110.</title>
        <authorList>
            <person name="Hayashi K."/>
            <person name="Morooka N."/>
            <person name="Yamamoto Y."/>
            <person name="Fujita K."/>
            <person name="Isono K."/>
            <person name="Choi S."/>
            <person name="Ohtsubo E."/>
            <person name="Baba T."/>
            <person name="Wanner B.L."/>
            <person name="Mori H."/>
            <person name="Horiuchi T."/>
        </authorList>
    </citation>
    <scope>NUCLEOTIDE SEQUENCE [LARGE SCALE GENOMIC DNA]</scope>
    <source>
        <strain>K12 / W3110 / ATCC 27325 / DSM 5911</strain>
    </source>
</reference>
<reference key="4">
    <citation type="journal article" date="1987" name="Nucleic Acids Res.">
        <title>Random cloning of bent DNA segments from Escherichia coli chromosome and primary characterization of their structures.</title>
        <authorList>
            <person name="Mizuno T."/>
        </authorList>
    </citation>
    <scope>NUCLEOTIDE SEQUENCE [GENOMIC DNA] OF 439-536</scope>
</reference>
<reference key="5">
    <citation type="journal article" date="1998" name="J. Bacteriol.">
        <title>Identification and characterization of aarF, a locus required for production of ubiquinone in Providencia stuartii and Escherichia coli and for expression of 2'-N-acetyltransferase in P. stuartii.</title>
        <authorList>
            <person name="Macinga D.R."/>
            <person name="Cook G.M."/>
            <person name="Poole R.K."/>
            <person name="Rather P.N."/>
        </authorList>
    </citation>
    <scope>FUNCTION IN UBIQUINONE BIOSYNTHESIS</scope>
    <scope>DISRUPTION PHENOTYPE</scope>
</reference>
<reference key="6">
    <citation type="journal article" date="2000" name="J. Bacteriol.">
        <title>Identification of Escherichia coli ubiB, a gene required for the first monooxygenase step in ubiquinone biosynthesis.</title>
        <authorList>
            <person name="Poon W.W."/>
            <person name="Davis D.E."/>
            <person name="Ha H.T."/>
            <person name="Jonassen T."/>
            <person name="Rather P.N."/>
            <person name="Clarke C.F."/>
        </authorList>
    </citation>
    <scope>FUNCTION IN UBIQUINONE BIOSYNTHESIS</scope>
    <scope>DISRUPTION PHENOTYPE</scope>
    <source>
        <strain>K12 / MG1655 / RM1734</strain>
    </source>
</reference>
<reference key="7">
    <citation type="journal article" date="2005" name="Science">
        <title>Global topology analysis of the Escherichia coli inner membrane proteome.</title>
        <authorList>
            <person name="Daley D.O."/>
            <person name="Rapp M."/>
            <person name="Granseth E."/>
            <person name="Melen K."/>
            <person name="Drew D."/>
            <person name="von Heijne G."/>
        </authorList>
    </citation>
    <scope>SUBCELLULAR LOCATION</scope>
    <source>
        <strain>K12 / MG1655 / ATCC 47076</strain>
    </source>
</reference>
<reference key="8">
    <citation type="journal article" date="2013" name="J. Biol. Chem.">
        <title>ubiI, a new gene in Escherichia coli coenzyme Q biosynthesis, is involved in aerobic C5-hydroxylation.</title>
        <authorList>
            <person name="Hajj Chehade M."/>
            <person name="Loiseau L."/>
            <person name="Lombard M."/>
            <person name="Pecqueur L."/>
            <person name="Ismail A."/>
            <person name="Smadja M."/>
            <person name="Golinelli-Pimpaneau B."/>
            <person name="Mellot-Draznieks C."/>
            <person name="Hamelin O."/>
            <person name="Aussel L."/>
            <person name="Kieffer-Jaquinod S."/>
            <person name="Labessan N."/>
            <person name="Barras F."/>
            <person name="Fontecave M."/>
            <person name="Pierrel F."/>
        </authorList>
    </citation>
    <scope>PROBABLE FUNCTION</scope>
    <source>
        <strain>K12</strain>
    </source>
</reference>
<feature type="chain" id="PRO_0000200703" description="Probable protein kinase UbiB">
    <location>
        <begin position="1"/>
        <end position="546"/>
    </location>
</feature>
<feature type="transmembrane region" description="Helical" evidence="1">
    <location>
        <begin position="501"/>
        <end position="521"/>
    </location>
</feature>
<feature type="transmembrane region" description="Helical" evidence="1">
    <location>
        <begin position="522"/>
        <end position="542"/>
    </location>
</feature>
<feature type="domain" description="Protein kinase" evidence="1">
    <location>
        <begin position="124"/>
        <end position="502"/>
    </location>
</feature>
<feature type="active site" description="Proton acceptor" evidence="1">
    <location>
        <position position="288"/>
    </location>
</feature>
<feature type="binding site" evidence="1">
    <location>
        <begin position="130"/>
        <end position="138"/>
    </location>
    <ligand>
        <name>ATP</name>
        <dbReference type="ChEBI" id="CHEBI:30616"/>
    </ligand>
</feature>
<feature type="binding site" evidence="1">
    <location>
        <position position="153"/>
    </location>
    <ligand>
        <name>ATP</name>
        <dbReference type="ChEBI" id="CHEBI:30616"/>
    </ligand>
</feature>
<feature type="sequence conflict" description="In Ref. 4; X05967." evidence="5" ref="4">
    <original>L</original>
    <variation>V</variation>
    <location>
        <position position="525"/>
    </location>
</feature>
<keyword id="KW-0067">ATP-binding</keyword>
<keyword id="KW-0997">Cell inner membrane</keyword>
<keyword id="KW-1003">Cell membrane</keyword>
<keyword id="KW-0418">Kinase</keyword>
<keyword id="KW-0472">Membrane</keyword>
<keyword id="KW-0547">Nucleotide-binding</keyword>
<keyword id="KW-1185">Reference proteome</keyword>
<keyword id="KW-0808">Transferase</keyword>
<keyword id="KW-0812">Transmembrane</keyword>
<keyword id="KW-1133">Transmembrane helix</keyword>
<keyword id="KW-0831">Ubiquinone biosynthesis</keyword>
<accession>P0A6A0</accession>
<accession>P27853</accession>
<accession>P27854</accession>
<accession>P27855</accession>
<accession>P76764</accession>
<accession>Q2M8E0</accession>
<proteinExistence type="evidence at protein level"/>
<dbReference type="EC" id="2.7.-.-" evidence="1"/>
<dbReference type="EMBL" id="M87049">
    <property type="protein sequence ID" value="AAA67630.2"/>
    <property type="status" value="ALT_FRAME"/>
    <property type="molecule type" value="Genomic_DNA"/>
</dbReference>
<dbReference type="EMBL" id="M87049">
    <property type="protein sequence ID" value="AAA67631.1"/>
    <property type="status" value="ALT_FRAME"/>
    <property type="molecule type" value="Genomic_DNA"/>
</dbReference>
<dbReference type="EMBL" id="M87049">
    <property type="protein sequence ID" value="AAA67632.1"/>
    <property type="status" value="ALT_FRAME"/>
    <property type="molecule type" value="Genomic_DNA"/>
</dbReference>
<dbReference type="EMBL" id="U00096">
    <property type="protein sequence ID" value="AAC76838.1"/>
    <property type="molecule type" value="Genomic_DNA"/>
</dbReference>
<dbReference type="EMBL" id="AP009048">
    <property type="protein sequence ID" value="BAE77466.1"/>
    <property type="molecule type" value="Genomic_DNA"/>
</dbReference>
<dbReference type="EMBL" id="X05967">
    <property type="status" value="NOT_ANNOTATED_CDS"/>
    <property type="molecule type" value="Genomic_DNA"/>
</dbReference>
<dbReference type="PIR" id="D65188">
    <property type="entry name" value="D65188"/>
</dbReference>
<dbReference type="RefSeq" id="NP_418279.1">
    <property type="nucleotide sequence ID" value="NC_000913.3"/>
</dbReference>
<dbReference type="RefSeq" id="WP_000187530.1">
    <property type="nucleotide sequence ID" value="NZ_STEB01000021.1"/>
</dbReference>
<dbReference type="SMR" id="P0A6A0"/>
<dbReference type="BioGRID" id="4260948">
    <property type="interactions" value="367"/>
</dbReference>
<dbReference type="DIP" id="DIP-35858N"/>
<dbReference type="FunCoup" id="P0A6A0">
    <property type="interactions" value="545"/>
</dbReference>
<dbReference type="IntAct" id="P0A6A0">
    <property type="interactions" value="13"/>
</dbReference>
<dbReference type="STRING" id="511145.b3835"/>
<dbReference type="jPOST" id="P0A6A0"/>
<dbReference type="PaxDb" id="511145-b3835"/>
<dbReference type="DNASU" id="948322"/>
<dbReference type="EnsemblBacteria" id="AAC76838">
    <property type="protein sequence ID" value="AAC76838"/>
    <property type="gene ID" value="b3835"/>
</dbReference>
<dbReference type="GeneID" id="75204829"/>
<dbReference type="GeneID" id="948322"/>
<dbReference type="KEGG" id="ecj:JW3812"/>
<dbReference type="KEGG" id="eco:b3835"/>
<dbReference type="KEGG" id="ecoc:C3026_20750"/>
<dbReference type="PATRIC" id="fig|1411691.4.peg.2873"/>
<dbReference type="EchoBASE" id="EB1443"/>
<dbReference type="eggNOG" id="COG0661">
    <property type="taxonomic scope" value="Bacteria"/>
</dbReference>
<dbReference type="HOGENOM" id="CLU_006533_0_0_6"/>
<dbReference type="InParanoid" id="P0A6A0"/>
<dbReference type="OMA" id="FQTARRF"/>
<dbReference type="OrthoDB" id="9795390at2"/>
<dbReference type="PhylomeDB" id="P0A6A0"/>
<dbReference type="BioCyc" id="EcoCyc:2-OCTAPRENYLPHENOL-HYDROX-MONOMER"/>
<dbReference type="UniPathway" id="UPA00232"/>
<dbReference type="PRO" id="PR:P0A6A0"/>
<dbReference type="Proteomes" id="UP000000625">
    <property type="component" value="Chromosome"/>
</dbReference>
<dbReference type="GO" id="GO:0005886">
    <property type="term" value="C:plasma membrane"/>
    <property type="evidence" value="ECO:0000314"/>
    <property type="project" value="EcoCyc"/>
</dbReference>
<dbReference type="GO" id="GO:0005524">
    <property type="term" value="F:ATP binding"/>
    <property type="evidence" value="ECO:0007669"/>
    <property type="project" value="UniProtKB-KW"/>
</dbReference>
<dbReference type="GO" id="GO:0004672">
    <property type="term" value="F:protein kinase activity"/>
    <property type="evidence" value="ECO:0007669"/>
    <property type="project" value="UniProtKB-UniRule"/>
</dbReference>
<dbReference type="GO" id="GO:0010795">
    <property type="term" value="P:regulation of ubiquinone biosynthetic process"/>
    <property type="evidence" value="ECO:0007669"/>
    <property type="project" value="UniProtKB-UniRule"/>
</dbReference>
<dbReference type="GO" id="GO:0006744">
    <property type="term" value="P:ubiquinone biosynthetic process"/>
    <property type="evidence" value="ECO:0000315"/>
    <property type="project" value="EcoCyc"/>
</dbReference>
<dbReference type="CDD" id="cd13972">
    <property type="entry name" value="UbiB"/>
    <property type="match status" value="1"/>
</dbReference>
<dbReference type="HAMAP" id="MF_00414">
    <property type="entry name" value="UbiB"/>
    <property type="match status" value="1"/>
</dbReference>
<dbReference type="InterPro" id="IPR004147">
    <property type="entry name" value="ABC1_dom"/>
</dbReference>
<dbReference type="InterPro" id="IPR011009">
    <property type="entry name" value="Kinase-like_dom_sf"/>
</dbReference>
<dbReference type="InterPro" id="IPR010232">
    <property type="entry name" value="UbiB"/>
</dbReference>
<dbReference type="InterPro" id="IPR045308">
    <property type="entry name" value="UbiB_bact"/>
</dbReference>
<dbReference type="InterPro" id="IPR050154">
    <property type="entry name" value="UbiB_kinase"/>
</dbReference>
<dbReference type="NCBIfam" id="NF003404">
    <property type="entry name" value="PRK04750.1"/>
    <property type="match status" value="1"/>
</dbReference>
<dbReference type="NCBIfam" id="TIGR01982">
    <property type="entry name" value="UbiB"/>
    <property type="match status" value="1"/>
</dbReference>
<dbReference type="PANTHER" id="PTHR10566">
    <property type="entry name" value="CHAPERONE-ACTIVITY OF BC1 COMPLEX CABC1 -RELATED"/>
    <property type="match status" value="1"/>
</dbReference>
<dbReference type="PANTHER" id="PTHR10566:SF113">
    <property type="entry name" value="PROTEIN ACTIVITY OF BC1 COMPLEX KINASE 7, CHLOROPLASTIC"/>
    <property type="match status" value="1"/>
</dbReference>
<dbReference type="Pfam" id="PF03109">
    <property type="entry name" value="ABC1"/>
    <property type="match status" value="1"/>
</dbReference>
<dbReference type="SUPFAM" id="SSF56112">
    <property type="entry name" value="Protein kinase-like (PK-like)"/>
    <property type="match status" value="1"/>
</dbReference>
<gene>
    <name evidence="1" type="primary">ubiB</name>
    <name type="synonym">aarF</name>
    <name type="synonym">yigQ</name>
    <name type="synonym">yigR</name>
    <name type="synonym">yigS</name>
    <name type="ordered locus">b3835</name>
    <name type="ordered locus">JW3812</name>
</gene>
<sequence>MTPGEVRRLYFIIRTFLSYGLDELIPKMRITLPLRLWRYSLFWMPNRHKDKLLGERLRLALQELGPVWIKFGQMLSTRRDLFPPHIADQLALLQDKVAPFDGKLAKQQIEAAMGGLPVEAWFDDFEIKPLASASIAQVHTARLKSNGKEVVIKVIRPDILPVIKADLKLIYRLARWVPRLLPDGRRLRPTEVVREYEKTLIDELNLLRESANAIQLRRNFEDSPMLYIPEVYPDYCSEGMMVMERIYGIPVSDVAALEKNGTNMKLLAERGVQVFFTQVFRDSFFHADMHPGNIFVSYEHPENPKYIGIDCGIVGSLNKEDKRYLAENFIAFFNRDYRKVAELHVDSGWVPPDTNVEEFEFAIRTVCEPIFEKPLAEISFGHVLLNLFNTARRFNMEVQPQLVLLQKTLLYVEGVGRQLYPQLDLWKTAKPFLESWIKDQVGIPALVRAFKEKAPFWVEKMPELPELVYDSLRQGKYLQHSVDKIARELQSNHVRQGQSRYFLGIGATLVLSGTFLLVSRPEWGLMPGWLMAGGLIAWFVGWRKTR</sequence>
<evidence type="ECO:0000255" key="1">
    <source>
        <dbReference type="HAMAP-Rule" id="MF_00414"/>
    </source>
</evidence>
<evidence type="ECO:0000269" key="2">
    <source>
    </source>
</evidence>
<evidence type="ECO:0000269" key="3">
    <source>
    </source>
</evidence>
<evidence type="ECO:0000269" key="4">
    <source>
    </source>
</evidence>
<evidence type="ECO:0000305" key="5"/>
<name>UBIB_ECOLI</name>